<protein>
    <recommendedName>
        <fullName evidence="1">2-C-methyl-D-erythritol 4-phosphate cytidylyltransferase</fullName>
        <ecNumber evidence="1">2.7.7.60</ecNumber>
    </recommendedName>
    <alternativeName>
        <fullName evidence="1">4-diphosphocytidyl-2C-methyl-D-erythritol synthase</fullName>
    </alternativeName>
    <alternativeName>
        <fullName evidence="1">MEP cytidylyltransferase</fullName>
        <shortName evidence="1">MCT</shortName>
    </alternativeName>
</protein>
<reference key="1">
    <citation type="submission" date="2008-01" db="EMBL/GenBank/DDBJ databases">
        <title>Complete sequence of Pseudomonas putida GB-1.</title>
        <authorList>
            <consortium name="US DOE Joint Genome Institute"/>
            <person name="Copeland A."/>
            <person name="Lucas S."/>
            <person name="Lapidus A."/>
            <person name="Barry K."/>
            <person name="Glavina del Rio T."/>
            <person name="Dalin E."/>
            <person name="Tice H."/>
            <person name="Pitluck S."/>
            <person name="Bruce D."/>
            <person name="Goodwin L."/>
            <person name="Chertkov O."/>
            <person name="Brettin T."/>
            <person name="Detter J.C."/>
            <person name="Han C."/>
            <person name="Kuske C.R."/>
            <person name="Schmutz J."/>
            <person name="Larimer F."/>
            <person name="Land M."/>
            <person name="Hauser L."/>
            <person name="Kyrpides N."/>
            <person name="Kim E."/>
            <person name="McCarthy J.K."/>
            <person name="Richardson P."/>
        </authorList>
    </citation>
    <scope>NUCLEOTIDE SEQUENCE [LARGE SCALE GENOMIC DNA]</scope>
    <source>
        <strain>GB-1</strain>
    </source>
</reference>
<proteinExistence type="inferred from homology"/>
<dbReference type="EC" id="2.7.7.60" evidence="1"/>
<dbReference type="EMBL" id="CP000926">
    <property type="protein sequence ID" value="ABY97076.1"/>
    <property type="molecule type" value="Genomic_DNA"/>
</dbReference>
<dbReference type="RefSeq" id="WP_012270855.1">
    <property type="nucleotide sequence ID" value="NC_010322.1"/>
</dbReference>
<dbReference type="SMR" id="B0KSC1"/>
<dbReference type="KEGG" id="ppg:PputGB1_1168"/>
<dbReference type="eggNOG" id="COG1211">
    <property type="taxonomic scope" value="Bacteria"/>
</dbReference>
<dbReference type="HOGENOM" id="CLU_061281_3_1_6"/>
<dbReference type="UniPathway" id="UPA00056">
    <property type="reaction ID" value="UER00093"/>
</dbReference>
<dbReference type="Proteomes" id="UP000002157">
    <property type="component" value="Chromosome"/>
</dbReference>
<dbReference type="GO" id="GO:0050518">
    <property type="term" value="F:2-C-methyl-D-erythritol 4-phosphate cytidylyltransferase activity"/>
    <property type="evidence" value="ECO:0007669"/>
    <property type="project" value="UniProtKB-UniRule"/>
</dbReference>
<dbReference type="GO" id="GO:0019288">
    <property type="term" value="P:isopentenyl diphosphate biosynthetic process, methylerythritol 4-phosphate pathway"/>
    <property type="evidence" value="ECO:0007669"/>
    <property type="project" value="UniProtKB-UniRule"/>
</dbReference>
<dbReference type="CDD" id="cd02516">
    <property type="entry name" value="CDP-ME_synthetase"/>
    <property type="match status" value="1"/>
</dbReference>
<dbReference type="FunFam" id="3.90.550.10:FF:000003">
    <property type="entry name" value="2-C-methyl-D-erythritol 4-phosphate cytidylyltransferase"/>
    <property type="match status" value="1"/>
</dbReference>
<dbReference type="Gene3D" id="3.90.550.10">
    <property type="entry name" value="Spore Coat Polysaccharide Biosynthesis Protein SpsA, Chain A"/>
    <property type="match status" value="1"/>
</dbReference>
<dbReference type="HAMAP" id="MF_00108">
    <property type="entry name" value="IspD"/>
    <property type="match status" value="1"/>
</dbReference>
<dbReference type="InterPro" id="IPR001228">
    <property type="entry name" value="IspD"/>
</dbReference>
<dbReference type="InterPro" id="IPR034683">
    <property type="entry name" value="IspD/TarI"/>
</dbReference>
<dbReference type="InterPro" id="IPR050088">
    <property type="entry name" value="IspD/TarI_cytidylyltransf_bact"/>
</dbReference>
<dbReference type="InterPro" id="IPR018294">
    <property type="entry name" value="ISPD_synthase_CS"/>
</dbReference>
<dbReference type="InterPro" id="IPR029044">
    <property type="entry name" value="Nucleotide-diphossugar_trans"/>
</dbReference>
<dbReference type="NCBIfam" id="TIGR00453">
    <property type="entry name" value="ispD"/>
    <property type="match status" value="1"/>
</dbReference>
<dbReference type="PANTHER" id="PTHR32125">
    <property type="entry name" value="2-C-METHYL-D-ERYTHRITOL 4-PHOSPHATE CYTIDYLYLTRANSFERASE, CHLOROPLASTIC"/>
    <property type="match status" value="1"/>
</dbReference>
<dbReference type="PANTHER" id="PTHR32125:SF4">
    <property type="entry name" value="2-C-METHYL-D-ERYTHRITOL 4-PHOSPHATE CYTIDYLYLTRANSFERASE, CHLOROPLASTIC"/>
    <property type="match status" value="1"/>
</dbReference>
<dbReference type="Pfam" id="PF01128">
    <property type="entry name" value="IspD"/>
    <property type="match status" value="1"/>
</dbReference>
<dbReference type="SUPFAM" id="SSF53448">
    <property type="entry name" value="Nucleotide-diphospho-sugar transferases"/>
    <property type="match status" value="1"/>
</dbReference>
<dbReference type="PROSITE" id="PS01295">
    <property type="entry name" value="ISPD"/>
    <property type="match status" value="1"/>
</dbReference>
<sequence length="235" mass="25588">MINTLPAFWAVIPAAGVGARMAADRPKQYLELAGQTLLEHSLDCFLGHPALAGVVVSIADDDPYWPGLRYASDPRIQRAAGGRERADSVLNALLVLHAQGASDSDWVLVHDAARPNLARSDLDKLLSELADDPVGGLLAVPARDTLKRADGNGRVSATVDRSTIWQAYTPQMFRLGALHRALAECLVSDVVVTDEASAIEWSGQAPRLVEGRSDNIKVTRPEDLEWLRQRWAGRR</sequence>
<evidence type="ECO:0000255" key="1">
    <source>
        <dbReference type="HAMAP-Rule" id="MF_00108"/>
    </source>
</evidence>
<name>ISPD_PSEPG</name>
<comment type="function">
    <text evidence="1">Catalyzes the formation of 4-diphosphocytidyl-2-C-methyl-D-erythritol from CTP and 2-C-methyl-D-erythritol 4-phosphate (MEP).</text>
</comment>
<comment type="catalytic activity">
    <reaction evidence="1">
        <text>2-C-methyl-D-erythritol 4-phosphate + CTP + H(+) = 4-CDP-2-C-methyl-D-erythritol + diphosphate</text>
        <dbReference type="Rhea" id="RHEA:13429"/>
        <dbReference type="ChEBI" id="CHEBI:15378"/>
        <dbReference type="ChEBI" id="CHEBI:33019"/>
        <dbReference type="ChEBI" id="CHEBI:37563"/>
        <dbReference type="ChEBI" id="CHEBI:57823"/>
        <dbReference type="ChEBI" id="CHEBI:58262"/>
        <dbReference type="EC" id="2.7.7.60"/>
    </reaction>
</comment>
<comment type="pathway">
    <text evidence="1">Isoprenoid biosynthesis; isopentenyl diphosphate biosynthesis via DXP pathway; isopentenyl diphosphate from 1-deoxy-D-xylulose 5-phosphate: step 2/6.</text>
</comment>
<comment type="similarity">
    <text evidence="1">Belongs to the IspD/TarI cytidylyltransferase family. IspD subfamily.</text>
</comment>
<keyword id="KW-0414">Isoprene biosynthesis</keyword>
<keyword id="KW-0548">Nucleotidyltransferase</keyword>
<keyword id="KW-0808">Transferase</keyword>
<accession>B0KSC1</accession>
<gene>
    <name evidence="1" type="primary">ispD</name>
    <name type="ordered locus">PputGB1_1168</name>
</gene>
<organism>
    <name type="scientific">Pseudomonas putida (strain GB-1)</name>
    <dbReference type="NCBI Taxonomy" id="76869"/>
    <lineage>
        <taxon>Bacteria</taxon>
        <taxon>Pseudomonadati</taxon>
        <taxon>Pseudomonadota</taxon>
        <taxon>Gammaproteobacteria</taxon>
        <taxon>Pseudomonadales</taxon>
        <taxon>Pseudomonadaceae</taxon>
        <taxon>Pseudomonas</taxon>
    </lineage>
</organism>
<feature type="chain" id="PRO_1000075940" description="2-C-methyl-D-erythritol 4-phosphate cytidylyltransferase">
    <location>
        <begin position="1"/>
        <end position="235"/>
    </location>
</feature>
<feature type="site" description="Transition state stabilizer" evidence="1">
    <location>
        <position position="20"/>
    </location>
</feature>
<feature type="site" description="Transition state stabilizer" evidence="1">
    <location>
        <position position="27"/>
    </location>
</feature>
<feature type="site" description="Positions MEP for the nucleophilic attack" evidence="1">
    <location>
        <position position="161"/>
    </location>
</feature>
<feature type="site" description="Positions MEP for the nucleophilic attack" evidence="1">
    <location>
        <position position="217"/>
    </location>
</feature>